<organism>
    <name type="scientific">Nostoc punctiforme (strain ATCC 29133 / PCC 73102)</name>
    <dbReference type="NCBI Taxonomy" id="63737"/>
    <lineage>
        <taxon>Bacteria</taxon>
        <taxon>Bacillati</taxon>
        <taxon>Cyanobacteriota</taxon>
        <taxon>Cyanophyceae</taxon>
        <taxon>Nostocales</taxon>
        <taxon>Nostocaceae</taxon>
        <taxon>Nostoc</taxon>
    </lineage>
</organism>
<protein>
    <recommendedName>
        <fullName evidence="1">DNA-directed RNA polymerase subunit beta'</fullName>
        <shortName evidence="1">RNAP subunit beta'</shortName>
        <ecNumber evidence="1">2.7.7.6</ecNumber>
    </recommendedName>
    <alternativeName>
        <fullName evidence="1">RNA polymerase subunit beta'</fullName>
    </alternativeName>
    <alternativeName>
        <fullName evidence="1">Transcriptase subunit beta'</fullName>
    </alternativeName>
</protein>
<name>RPOC2_NOSP7</name>
<reference key="1">
    <citation type="journal article" date="2013" name="Plant Physiol.">
        <title>A Nostoc punctiforme Sugar Transporter Necessary to Establish a Cyanobacterium-Plant Symbiosis.</title>
        <authorList>
            <person name="Ekman M."/>
            <person name="Picossi S."/>
            <person name="Campbell E.L."/>
            <person name="Meeks J.C."/>
            <person name="Flores E."/>
        </authorList>
    </citation>
    <scope>NUCLEOTIDE SEQUENCE [LARGE SCALE GENOMIC DNA]</scope>
    <source>
        <strain>ATCC 29133 / PCC 73102</strain>
    </source>
</reference>
<dbReference type="EC" id="2.7.7.6" evidence="1"/>
<dbReference type="EMBL" id="CP001037">
    <property type="protein sequence ID" value="ACC83331.1"/>
    <property type="molecule type" value="Genomic_DNA"/>
</dbReference>
<dbReference type="RefSeq" id="WP_012411286.1">
    <property type="nucleotide sequence ID" value="NC_010628.1"/>
</dbReference>
<dbReference type="SMR" id="B2J1A0"/>
<dbReference type="STRING" id="63737.Npun_F4987"/>
<dbReference type="EnsemblBacteria" id="ACC83331">
    <property type="protein sequence ID" value="ACC83331"/>
    <property type="gene ID" value="Npun_F4987"/>
</dbReference>
<dbReference type="KEGG" id="npu:Npun_F4987"/>
<dbReference type="eggNOG" id="COG0086">
    <property type="taxonomic scope" value="Bacteria"/>
</dbReference>
<dbReference type="HOGENOM" id="CLU_000524_1_0_3"/>
<dbReference type="OrthoDB" id="9815296at2"/>
<dbReference type="PhylomeDB" id="B2J1A0"/>
<dbReference type="Proteomes" id="UP000001191">
    <property type="component" value="Chromosome"/>
</dbReference>
<dbReference type="GO" id="GO:0000428">
    <property type="term" value="C:DNA-directed RNA polymerase complex"/>
    <property type="evidence" value="ECO:0007669"/>
    <property type="project" value="UniProtKB-KW"/>
</dbReference>
<dbReference type="GO" id="GO:0003677">
    <property type="term" value="F:DNA binding"/>
    <property type="evidence" value="ECO:0007669"/>
    <property type="project" value="UniProtKB-UniRule"/>
</dbReference>
<dbReference type="GO" id="GO:0003899">
    <property type="term" value="F:DNA-directed RNA polymerase activity"/>
    <property type="evidence" value="ECO:0007669"/>
    <property type="project" value="UniProtKB-UniRule"/>
</dbReference>
<dbReference type="GO" id="GO:0008270">
    <property type="term" value="F:zinc ion binding"/>
    <property type="evidence" value="ECO:0007669"/>
    <property type="project" value="UniProtKB-UniRule"/>
</dbReference>
<dbReference type="GO" id="GO:0006351">
    <property type="term" value="P:DNA-templated transcription"/>
    <property type="evidence" value="ECO:0007669"/>
    <property type="project" value="UniProtKB-UniRule"/>
</dbReference>
<dbReference type="CDD" id="cd02655">
    <property type="entry name" value="RNAP_beta'_C"/>
    <property type="match status" value="1"/>
</dbReference>
<dbReference type="FunFam" id="1.10.150.390:FF:000002">
    <property type="entry name" value="DNA-directed RNA polymerase subunit beta"/>
    <property type="match status" value="1"/>
</dbReference>
<dbReference type="Gene3D" id="1.10.132.30">
    <property type="match status" value="1"/>
</dbReference>
<dbReference type="Gene3D" id="1.10.150.390">
    <property type="match status" value="1"/>
</dbReference>
<dbReference type="Gene3D" id="1.10.1790.20">
    <property type="match status" value="1"/>
</dbReference>
<dbReference type="Gene3D" id="2.40.50.100">
    <property type="match status" value="1"/>
</dbReference>
<dbReference type="Gene3D" id="1.10.274.100">
    <property type="entry name" value="RNA polymerase Rpb1, domain 3"/>
    <property type="match status" value="1"/>
</dbReference>
<dbReference type="HAMAP" id="MF_01324">
    <property type="entry name" value="RNApol_bact_RpoC2"/>
    <property type="match status" value="1"/>
</dbReference>
<dbReference type="InterPro" id="IPR012756">
    <property type="entry name" value="DNA-dir_RpoC2_beta_pp"/>
</dbReference>
<dbReference type="InterPro" id="IPR045867">
    <property type="entry name" value="DNA-dir_RpoC_beta_prime"/>
</dbReference>
<dbReference type="InterPro" id="IPR007066">
    <property type="entry name" value="RNA_pol_Rpb1_3"/>
</dbReference>
<dbReference type="InterPro" id="IPR042102">
    <property type="entry name" value="RNA_pol_Rpb1_3_sf"/>
</dbReference>
<dbReference type="InterPro" id="IPR007083">
    <property type="entry name" value="RNA_pol_Rpb1_4"/>
</dbReference>
<dbReference type="InterPro" id="IPR007081">
    <property type="entry name" value="RNA_pol_Rpb1_5"/>
</dbReference>
<dbReference type="InterPro" id="IPR038120">
    <property type="entry name" value="Rpb1_funnel_sf"/>
</dbReference>
<dbReference type="NCBIfam" id="NF002724">
    <property type="entry name" value="PRK02597.1"/>
    <property type="match status" value="1"/>
</dbReference>
<dbReference type="NCBIfam" id="TIGR02388">
    <property type="entry name" value="rpoC2_cyan"/>
    <property type="match status" value="1"/>
</dbReference>
<dbReference type="PANTHER" id="PTHR19376">
    <property type="entry name" value="DNA-DIRECTED RNA POLYMERASE"/>
    <property type="match status" value="1"/>
</dbReference>
<dbReference type="PANTHER" id="PTHR19376:SF68">
    <property type="entry name" value="DNA-DIRECTED RNA POLYMERASE SUBUNIT BETA"/>
    <property type="match status" value="1"/>
</dbReference>
<dbReference type="Pfam" id="PF04983">
    <property type="entry name" value="RNA_pol_Rpb1_3"/>
    <property type="match status" value="1"/>
</dbReference>
<dbReference type="Pfam" id="PF05000">
    <property type="entry name" value="RNA_pol_Rpb1_4"/>
    <property type="match status" value="1"/>
</dbReference>
<dbReference type="Pfam" id="PF04998">
    <property type="entry name" value="RNA_pol_Rpb1_5"/>
    <property type="match status" value="2"/>
</dbReference>
<dbReference type="SUPFAM" id="SSF64484">
    <property type="entry name" value="beta and beta-prime subunits of DNA dependent RNA-polymerase"/>
    <property type="match status" value="1"/>
</dbReference>
<evidence type="ECO:0000255" key="1">
    <source>
        <dbReference type="HAMAP-Rule" id="MF_01324"/>
    </source>
</evidence>
<evidence type="ECO:0000256" key="2">
    <source>
        <dbReference type="SAM" id="MobiDB-lite"/>
    </source>
</evidence>
<gene>
    <name evidence="1" type="primary">rpoC2</name>
    <name type="ordered locus">Npun_F4987</name>
</gene>
<accession>B2J1A0</accession>
<feature type="chain" id="PRO_0000353523" description="DNA-directed RNA polymerase subunit beta'">
    <location>
        <begin position="1"/>
        <end position="1349"/>
    </location>
</feature>
<feature type="region of interest" description="Disordered" evidence="2">
    <location>
        <begin position="1298"/>
        <end position="1349"/>
    </location>
</feature>
<feature type="compositionally biased region" description="Acidic residues" evidence="2">
    <location>
        <begin position="1319"/>
        <end position="1349"/>
    </location>
</feature>
<feature type="binding site" evidence="1">
    <location>
        <position position="219"/>
    </location>
    <ligand>
        <name>Zn(2+)</name>
        <dbReference type="ChEBI" id="CHEBI:29105"/>
    </ligand>
</feature>
<feature type="binding site" evidence="1">
    <location>
        <position position="293"/>
    </location>
    <ligand>
        <name>Zn(2+)</name>
        <dbReference type="ChEBI" id="CHEBI:29105"/>
    </ligand>
</feature>
<feature type="binding site" evidence="1">
    <location>
        <position position="300"/>
    </location>
    <ligand>
        <name>Zn(2+)</name>
        <dbReference type="ChEBI" id="CHEBI:29105"/>
    </ligand>
</feature>
<feature type="binding site" evidence="1">
    <location>
        <position position="303"/>
    </location>
    <ligand>
        <name>Zn(2+)</name>
        <dbReference type="ChEBI" id="CHEBI:29105"/>
    </ligand>
</feature>
<keyword id="KW-0240">DNA-directed RNA polymerase</keyword>
<keyword id="KW-0479">Metal-binding</keyword>
<keyword id="KW-0548">Nucleotidyltransferase</keyword>
<keyword id="KW-1185">Reference proteome</keyword>
<keyword id="KW-0804">Transcription</keyword>
<keyword id="KW-0808">Transferase</keyword>
<keyword id="KW-0862">Zinc</keyword>
<comment type="function">
    <text evidence="1">DNA-dependent RNA polymerase catalyzes the transcription of DNA into RNA using the four ribonucleoside triphosphates as substrates.</text>
</comment>
<comment type="catalytic activity">
    <reaction evidence="1">
        <text>RNA(n) + a ribonucleoside 5'-triphosphate = RNA(n+1) + diphosphate</text>
        <dbReference type="Rhea" id="RHEA:21248"/>
        <dbReference type="Rhea" id="RHEA-COMP:14527"/>
        <dbReference type="Rhea" id="RHEA-COMP:17342"/>
        <dbReference type="ChEBI" id="CHEBI:33019"/>
        <dbReference type="ChEBI" id="CHEBI:61557"/>
        <dbReference type="ChEBI" id="CHEBI:140395"/>
        <dbReference type="EC" id="2.7.7.6"/>
    </reaction>
</comment>
<comment type="cofactor">
    <cofactor evidence="1">
        <name>Zn(2+)</name>
        <dbReference type="ChEBI" id="CHEBI:29105"/>
    </cofactor>
    <text evidence="1">Binds 1 Zn(2+) ion per subunit.</text>
</comment>
<comment type="subunit">
    <text evidence="1">In cyanobacteria the RNAP catalytic core is composed of 2 alpha, 1 beta, 1 beta', 1 gamma and 1 omega subunit. When a sigma factor is associated with the core the holoenzyme is formed, which can initiate transcription.</text>
</comment>
<comment type="similarity">
    <text evidence="1">Belongs to the RNA polymerase beta' chain family. RpoC2 subfamily.</text>
</comment>
<sequence>MTNEKMIFRNRVVDKGQLRNLISWAFTNYGTARTAVMADKLKDLGFRYATKAGVSISVDDLMIPPTKRLLLEAAEEEIRATETRYQRGEITEVERFQKVIDTWNGTSEALKDEVVVHFKKTNPLNSVYMMAFSGARGNISQVRQLVGMRGLMADPQGEIIDLPIKTNFREGLTVTEYIISSYGARKGLVDTALRTADSGYLTRRLVDVSQDVIIREFDCGTTRGLTIGPMTEGAKTLIPLATRLMGRVIGEDVVHPVTKELIAARNSPIPEDLAKKIEKSGVGEVVVRSPLTCEAARSVCQHCYGWSLAHAKMVDLGEAVGIIAAQSIGEPGTQLTMRTFHTGGVFTGEVAQQVRSKIDGTVKLPRKLKTRTYRTRHGEDALYVEANGIMLLEPTKVGDVTPENQEVHLTQGSTLYVFDGNKVKQGQLLAEVALGGRTTRTNTEKAVKDVASDLAGEVQFAEVVPEQKTDRQGNTTTTAARGGLIWILSGEVYNLPPGAELVVKNGDAIAANGVLAETKLASLHGGVVRLPEATPGKSTREIEIITASVVLDQATVTVQSSQGRNNYLVSTGNNQVFNLRATPGTKVQNGQVVAELIDDRYRTTTGGFLKFAGVEVQKKGKAKLGYEVVQGGTLLWIPEESHEVNKDISLLLVEDGQFVEAGTEVVKDIFCQNSGVVEVTQKNDILREVVVKPGELLMVDDPESVIGRDNTFIQPGEEFQGNVATELRYIQYVETPEGPALLSRPVVEFAVPDNPDVPSTTSVSQQTGRSIQLRAVQRLPYKDSERVKSVEGVELLRTQLVLEIEQEGEQDHNASPLAADIELVEDTENPEVQRLQLVILESLVIRRDITADATQGSTQTTLEVYDGLTIAPGSVVARTQILCKEGGEVRGVRKGTENVRRCLVLRDVDRLTINTSTQPKVKVGDLLVEGTEVAPGVFAPESGQVVDIKNAAAASGGESALSTKNYVITTRIGRPYRVSPGAVLQIEDGDLVQRGDNLVLLVFERAKTGDIIQGLPRIEELLEARKPKEACILCRRGGEVKVVYAESGDEAIAIKVVESNGVVTDYPLGPGQNLIVPDGSIVLAGQPLTDGPSNPHEILEIFFSLGSEDGIYACASLALQKVQTFLVNEVQMVYQSQGIDISDKHIEVIVRQMTNKVRIDDGGDTTMLPGELVELRQVEQVNEAMAITGGARAQYTPVLLGITKASLNTDSFISAASFQETTRVLTEAAIEGKSDWLRGLKENVIIGRLIPAGTGYNTYEEPGAIDDYAAEISSSVLDEVDDPLDMVLDDRTARTYNLDSPTLGESGFGSRRAERSVLDDEDELIADEVVDDDDFEEEEEDDEDDFDDE</sequence>
<proteinExistence type="inferred from homology"/>